<comment type="function">
    <text evidence="3">Component of the cytochrome c oxidase, the last enzyme in the mitochondrial electron transport chain which drives oxidative phosphorylation. The respiratory chain contains 3 multisubunit complexes succinate dehydrogenase (complex II, CII), ubiquinol-cytochrome c oxidoreductase (cytochrome b-c1 complex, complex III, CIII) and cytochrome c oxidase (complex IV, CIV), that cooperate to transfer electrons derived from NADH and succinate to molecular oxygen, creating an electrochemical gradient over the inner membrane that drives transmembrane transport and the ATP synthase. Cytochrome c oxidase is the component of the respiratory chain that catalyzes the reduction of oxygen to water. Electrons originating from reduced cytochrome c in the intermembrane space (IMS) are transferred via the dinuclear copper A center (CU(A)) of subunit 2 and heme A of subunit 1 to the active site in subunit 1, a binuclear center (BNC) formed by heme A3 and copper B (CU(B)). The BNC reduces molecular oxygen to 2 water molecules using 4 electrons from cytochrome c in the IMS and 4 protons from the mitochondrial matrix.</text>
</comment>
<comment type="catalytic activity">
    <reaction evidence="3">
        <text>4 Fe(II)-[cytochrome c] + O2 + 8 H(+)(in) = 4 Fe(III)-[cytochrome c] + 2 H2O + 4 H(+)(out)</text>
        <dbReference type="Rhea" id="RHEA:11436"/>
        <dbReference type="Rhea" id="RHEA-COMP:10350"/>
        <dbReference type="Rhea" id="RHEA-COMP:14399"/>
        <dbReference type="ChEBI" id="CHEBI:15377"/>
        <dbReference type="ChEBI" id="CHEBI:15378"/>
        <dbReference type="ChEBI" id="CHEBI:15379"/>
        <dbReference type="ChEBI" id="CHEBI:29033"/>
        <dbReference type="ChEBI" id="CHEBI:29034"/>
        <dbReference type="EC" id="7.1.1.9"/>
    </reaction>
    <physiologicalReaction direction="left-to-right" evidence="3">
        <dbReference type="Rhea" id="RHEA:11437"/>
    </physiologicalReaction>
</comment>
<comment type="cofactor">
    <cofactor evidence="4">
        <name>Cu cation</name>
        <dbReference type="ChEBI" id="CHEBI:23378"/>
    </cofactor>
    <text evidence="4">Binds a dinuclear copper A center per subunit.</text>
</comment>
<comment type="subunit">
    <text evidence="1 4">Component of the cytochrome c oxidase (complex IV, CIV), a multisubunit enzyme composed of 14 subunits. The complex is composed of a catalytic core of 3 subunits MT-CO1, MT-CO2 and MT-CO3, encoded in the mitochondrial DNA, and 11 supernumerary subunits COX4I, COX5A, COX5B, COX6A, COX6B, COX6C, COX7A, COX7B, COX7C, COX8 and NDUFA4, which are encoded in the nuclear genome. The complex exists as a monomer or a dimer and forms supercomplexes (SCs) in the inner mitochondrial membrane with NADH-ubiquinone oxidoreductase (complex I, CI) and ubiquinol-cytochrome c oxidoreductase (cytochrome b-c1 complex, complex III, CIII), resulting in different assemblies (supercomplex SCI(1)III(2)IV(1) and megacomplex MCI(2)III(2)IV(2)) (By similarity). Found in a complex with TMEM177, COA6, COX18, COX20, SCO1 and SCO2. Interacts with TMEM177 in a COX20-dependent manner. Interacts with COX20. Interacts with COX16 (By similarity).</text>
</comment>
<comment type="subcellular location">
    <subcellularLocation>
        <location evidence="4">Mitochondrion inner membrane</location>
        <topology evidence="4">Multi-pass membrane protein</topology>
    </subcellularLocation>
</comment>
<comment type="similarity">
    <text evidence="5">Belongs to the cytochrome c oxidase subunit 2 family.</text>
</comment>
<name>COX2_CANAD</name>
<accession>O47667</accession>
<sequence>MAYPFQLGLQDATSPIMEELLHFHDHTLMIVFLISSLVLYIISLMLTTKLTHTSTMDAQEVETVWTILPAIILILIALPSLRILYMMDEINNPSLTVKTMGHQWYWSYEYTDYEDLNFDSYMIPTQELKPGELRLLEVDNRVVLPMEMTIRMLVSSEDVLHSWAVPSLGLKTDAIPGRLNQTTLMAMRPGLYYGQCSEICGSNHSFMPIVLEMVPLSYFETWSALMV</sequence>
<feature type="chain" id="PRO_0000183530" description="Cytochrome c oxidase subunit 2">
    <location>
        <begin position="1"/>
        <end position="227"/>
    </location>
</feature>
<feature type="topological domain" description="Mitochondrial intermembrane" evidence="4">
    <location>
        <begin position="1"/>
        <end position="14"/>
    </location>
</feature>
<feature type="transmembrane region" description="Helical; Name=I" evidence="4">
    <location>
        <begin position="15"/>
        <end position="45"/>
    </location>
</feature>
<feature type="topological domain" description="Mitochondrial matrix" evidence="4">
    <location>
        <begin position="46"/>
        <end position="59"/>
    </location>
</feature>
<feature type="transmembrane region" description="Helical; Name=II" evidence="4">
    <location>
        <begin position="60"/>
        <end position="87"/>
    </location>
</feature>
<feature type="topological domain" description="Mitochondrial intermembrane" evidence="4">
    <location>
        <begin position="88"/>
        <end position="227"/>
    </location>
</feature>
<feature type="binding site" evidence="4">
    <location>
        <position position="161"/>
    </location>
    <ligand>
        <name>Cu cation</name>
        <dbReference type="ChEBI" id="CHEBI:23378"/>
        <label>A1</label>
    </ligand>
</feature>
<feature type="binding site" evidence="4">
    <location>
        <position position="196"/>
    </location>
    <ligand>
        <name>Cu cation</name>
        <dbReference type="ChEBI" id="CHEBI:23378"/>
        <label>A1</label>
    </ligand>
</feature>
<feature type="binding site" evidence="4">
    <location>
        <position position="196"/>
    </location>
    <ligand>
        <name>Cu cation</name>
        <dbReference type="ChEBI" id="CHEBI:23378"/>
        <label>A2</label>
    </ligand>
</feature>
<feature type="binding site" evidence="4">
    <location>
        <position position="198"/>
    </location>
    <ligand>
        <name>Cu cation</name>
        <dbReference type="ChEBI" id="CHEBI:23378"/>
        <label>A2</label>
    </ligand>
</feature>
<feature type="binding site" evidence="4">
    <location>
        <position position="198"/>
    </location>
    <ligand>
        <name>Mg(2+)</name>
        <dbReference type="ChEBI" id="CHEBI:18420"/>
        <note>ligand shared with MT-CO1</note>
    </ligand>
</feature>
<feature type="binding site" evidence="4">
    <location>
        <position position="200"/>
    </location>
    <ligand>
        <name>Cu cation</name>
        <dbReference type="ChEBI" id="CHEBI:23378"/>
        <label>A1</label>
    </ligand>
</feature>
<feature type="binding site" evidence="4">
    <location>
        <position position="200"/>
    </location>
    <ligand>
        <name>Cu cation</name>
        <dbReference type="ChEBI" id="CHEBI:23378"/>
        <label>A2</label>
    </ligand>
</feature>
<feature type="binding site" evidence="4">
    <location>
        <position position="204"/>
    </location>
    <ligand>
        <name>Cu cation</name>
        <dbReference type="ChEBI" id="CHEBI:23378"/>
        <label>A2</label>
    </ligand>
</feature>
<feature type="binding site" evidence="4">
    <location>
        <position position="207"/>
    </location>
    <ligand>
        <name>Cu cation</name>
        <dbReference type="ChEBI" id="CHEBI:23378"/>
        <label>A1</label>
    </ligand>
</feature>
<feature type="modified residue" description="Phosphotyrosine" evidence="2">
    <location>
        <position position="218"/>
    </location>
</feature>
<dbReference type="EC" id="7.1.1.9"/>
<dbReference type="EMBL" id="AF028208">
    <property type="protein sequence ID" value="AAC00101.1"/>
    <property type="molecule type" value="Genomic_DNA"/>
</dbReference>
<dbReference type="SMR" id="O47667"/>
<dbReference type="GO" id="GO:0005743">
    <property type="term" value="C:mitochondrial inner membrane"/>
    <property type="evidence" value="ECO:0007669"/>
    <property type="project" value="UniProtKB-SubCell"/>
</dbReference>
<dbReference type="GO" id="GO:0045277">
    <property type="term" value="C:respiratory chain complex IV"/>
    <property type="evidence" value="ECO:0000250"/>
    <property type="project" value="UniProtKB"/>
</dbReference>
<dbReference type="GO" id="GO:0005507">
    <property type="term" value="F:copper ion binding"/>
    <property type="evidence" value="ECO:0007669"/>
    <property type="project" value="InterPro"/>
</dbReference>
<dbReference type="GO" id="GO:0004129">
    <property type="term" value="F:cytochrome-c oxidase activity"/>
    <property type="evidence" value="ECO:0007669"/>
    <property type="project" value="UniProtKB-EC"/>
</dbReference>
<dbReference type="GO" id="GO:0042773">
    <property type="term" value="P:ATP synthesis coupled electron transport"/>
    <property type="evidence" value="ECO:0007669"/>
    <property type="project" value="TreeGrafter"/>
</dbReference>
<dbReference type="CDD" id="cd13912">
    <property type="entry name" value="CcO_II_C"/>
    <property type="match status" value="1"/>
</dbReference>
<dbReference type="FunFam" id="1.10.287.90:FF:000001">
    <property type="entry name" value="Cytochrome c oxidase subunit 2"/>
    <property type="match status" value="1"/>
</dbReference>
<dbReference type="FunFam" id="2.60.40.420:FF:000001">
    <property type="entry name" value="Cytochrome c oxidase subunit 2"/>
    <property type="match status" value="1"/>
</dbReference>
<dbReference type="Gene3D" id="1.10.287.90">
    <property type="match status" value="1"/>
</dbReference>
<dbReference type="Gene3D" id="2.60.40.420">
    <property type="entry name" value="Cupredoxins - blue copper proteins"/>
    <property type="match status" value="1"/>
</dbReference>
<dbReference type="InterPro" id="IPR045187">
    <property type="entry name" value="CcO_II"/>
</dbReference>
<dbReference type="InterPro" id="IPR002429">
    <property type="entry name" value="CcO_II-like_C"/>
</dbReference>
<dbReference type="InterPro" id="IPR034210">
    <property type="entry name" value="CcO_II_C"/>
</dbReference>
<dbReference type="InterPro" id="IPR001505">
    <property type="entry name" value="Copper_CuA"/>
</dbReference>
<dbReference type="InterPro" id="IPR008972">
    <property type="entry name" value="Cupredoxin"/>
</dbReference>
<dbReference type="InterPro" id="IPR014222">
    <property type="entry name" value="Cyt_c_oxidase_su2"/>
</dbReference>
<dbReference type="InterPro" id="IPR011759">
    <property type="entry name" value="Cyt_c_oxidase_su2_TM_dom"/>
</dbReference>
<dbReference type="InterPro" id="IPR036257">
    <property type="entry name" value="Cyt_c_oxidase_su2_TM_sf"/>
</dbReference>
<dbReference type="NCBIfam" id="TIGR02866">
    <property type="entry name" value="CoxB"/>
    <property type="match status" value="1"/>
</dbReference>
<dbReference type="PANTHER" id="PTHR22888:SF9">
    <property type="entry name" value="CYTOCHROME C OXIDASE SUBUNIT 2"/>
    <property type="match status" value="1"/>
</dbReference>
<dbReference type="PANTHER" id="PTHR22888">
    <property type="entry name" value="CYTOCHROME C OXIDASE, SUBUNIT II"/>
    <property type="match status" value="1"/>
</dbReference>
<dbReference type="Pfam" id="PF00116">
    <property type="entry name" value="COX2"/>
    <property type="match status" value="1"/>
</dbReference>
<dbReference type="Pfam" id="PF02790">
    <property type="entry name" value="COX2_TM"/>
    <property type="match status" value="1"/>
</dbReference>
<dbReference type="PRINTS" id="PR01166">
    <property type="entry name" value="CYCOXIDASEII"/>
</dbReference>
<dbReference type="SUPFAM" id="SSF49503">
    <property type="entry name" value="Cupredoxins"/>
    <property type="match status" value="1"/>
</dbReference>
<dbReference type="SUPFAM" id="SSF81464">
    <property type="entry name" value="Cytochrome c oxidase subunit II-like, transmembrane region"/>
    <property type="match status" value="1"/>
</dbReference>
<dbReference type="PROSITE" id="PS00078">
    <property type="entry name" value="COX2"/>
    <property type="match status" value="1"/>
</dbReference>
<dbReference type="PROSITE" id="PS50857">
    <property type="entry name" value="COX2_CUA"/>
    <property type="match status" value="1"/>
</dbReference>
<dbReference type="PROSITE" id="PS50999">
    <property type="entry name" value="COX2_TM"/>
    <property type="match status" value="1"/>
</dbReference>
<geneLocation type="mitochondrion"/>
<proteinExistence type="inferred from homology"/>
<protein>
    <recommendedName>
        <fullName>Cytochrome c oxidase subunit 2</fullName>
        <ecNumber>7.1.1.9</ecNumber>
    </recommendedName>
    <alternativeName>
        <fullName>Cytochrome c oxidase polypeptide II</fullName>
    </alternativeName>
</protein>
<gene>
    <name type="primary">MT-CO2</name>
    <name type="synonym">COII</name>
    <name type="synonym">COX2</name>
    <name type="synonym">COXII</name>
    <name type="synonym">MTCO2</name>
</gene>
<keyword id="KW-0186">Copper</keyword>
<keyword id="KW-0249">Electron transport</keyword>
<keyword id="KW-0460">Magnesium</keyword>
<keyword id="KW-0472">Membrane</keyword>
<keyword id="KW-0479">Metal-binding</keyword>
<keyword id="KW-0496">Mitochondrion</keyword>
<keyword id="KW-0999">Mitochondrion inner membrane</keyword>
<keyword id="KW-0597">Phosphoprotein</keyword>
<keyword id="KW-0679">Respiratory chain</keyword>
<keyword id="KW-1278">Translocase</keyword>
<keyword id="KW-0812">Transmembrane</keyword>
<keyword id="KW-1133">Transmembrane helix</keyword>
<keyword id="KW-0813">Transport</keyword>
<organism>
    <name type="scientific">Canis adustus</name>
    <name type="common">Side-striped jackal</name>
    <dbReference type="NCBI Taxonomy" id="68723"/>
    <lineage>
        <taxon>Eukaryota</taxon>
        <taxon>Metazoa</taxon>
        <taxon>Chordata</taxon>
        <taxon>Craniata</taxon>
        <taxon>Vertebrata</taxon>
        <taxon>Euteleostomi</taxon>
        <taxon>Mammalia</taxon>
        <taxon>Eutheria</taxon>
        <taxon>Laurasiatheria</taxon>
        <taxon>Carnivora</taxon>
        <taxon>Caniformia</taxon>
        <taxon>Canidae</taxon>
        <taxon>Canis</taxon>
    </lineage>
</organism>
<evidence type="ECO:0000250" key="1">
    <source>
        <dbReference type="UniProtKB" id="P00403"/>
    </source>
</evidence>
<evidence type="ECO:0000250" key="2">
    <source>
        <dbReference type="UniProtKB" id="P00406"/>
    </source>
</evidence>
<evidence type="ECO:0000250" key="3">
    <source>
        <dbReference type="UniProtKB" id="P00410"/>
    </source>
</evidence>
<evidence type="ECO:0000250" key="4">
    <source>
        <dbReference type="UniProtKB" id="P68530"/>
    </source>
</evidence>
<evidence type="ECO:0000305" key="5"/>
<reference key="1">
    <citation type="journal article" date="1997" name="Syst. Biol.">
        <title>Molecular systematics of the Canidae.</title>
        <authorList>
            <person name="Wayne R.K."/>
            <person name="Geffen E."/>
            <person name="Girman D.J."/>
            <person name="Koepfli K.-P."/>
            <person name="Lau L.M."/>
            <person name="Marshall C.R."/>
        </authorList>
    </citation>
    <scope>NUCLEOTIDE SEQUENCE [GENOMIC DNA]</scope>
</reference>